<dbReference type="EC" id="2.3.2.6" evidence="1"/>
<dbReference type="EMBL" id="CP001025">
    <property type="protein sequence ID" value="ACB63965.1"/>
    <property type="molecule type" value="Genomic_DNA"/>
</dbReference>
<dbReference type="RefSeq" id="WP_006751027.1">
    <property type="nucleotide sequence ID" value="NC_010551.1"/>
</dbReference>
<dbReference type="SMR" id="B1YPI8"/>
<dbReference type="GeneID" id="93083142"/>
<dbReference type="KEGG" id="bac:BamMC406_1478"/>
<dbReference type="HOGENOM" id="CLU_075045_0_0_4"/>
<dbReference type="OrthoDB" id="9790282at2"/>
<dbReference type="Proteomes" id="UP000001680">
    <property type="component" value="Chromosome 1"/>
</dbReference>
<dbReference type="GO" id="GO:0005737">
    <property type="term" value="C:cytoplasm"/>
    <property type="evidence" value="ECO:0007669"/>
    <property type="project" value="UniProtKB-SubCell"/>
</dbReference>
<dbReference type="GO" id="GO:0008914">
    <property type="term" value="F:leucyl-tRNA--protein transferase activity"/>
    <property type="evidence" value="ECO:0007669"/>
    <property type="project" value="UniProtKB-UniRule"/>
</dbReference>
<dbReference type="GO" id="GO:0030163">
    <property type="term" value="P:protein catabolic process"/>
    <property type="evidence" value="ECO:0007669"/>
    <property type="project" value="UniProtKB-UniRule"/>
</dbReference>
<dbReference type="Gene3D" id="3.40.630.70">
    <property type="entry name" value="Leucyl/phenylalanyl-tRNA-protein transferase, C-terminal domain"/>
    <property type="match status" value="1"/>
</dbReference>
<dbReference type="Gene3D" id="3.30.70.3550">
    <property type="entry name" value="Leucyl/phenylalanyl-tRNA-protein transferase, N-terminal domain"/>
    <property type="match status" value="1"/>
</dbReference>
<dbReference type="HAMAP" id="MF_00688">
    <property type="entry name" value="Leu_Phe_trans"/>
    <property type="match status" value="1"/>
</dbReference>
<dbReference type="InterPro" id="IPR016181">
    <property type="entry name" value="Acyl_CoA_acyltransferase"/>
</dbReference>
<dbReference type="InterPro" id="IPR004616">
    <property type="entry name" value="Leu/Phe-tRNA_Trfase"/>
</dbReference>
<dbReference type="InterPro" id="IPR042203">
    <property type="entry name" value="Leu/Phe-tRNA_Trfase_C"/>
</dbReference>
<dbReference type="InterPro" id="IPR042221">
    <property type="entry name" value="Leu/Phe-tRNA_Trfase_N"/>
</dbReference>
<dbReference type="NCBIfam" id="TIGR00667">
    <property type="entry name" value="aat"/>
    <property type="match status" value="1"/>
</dbReference>
<dbReference type="PANTHER" id="PTHR30098">
    <property type="entry name" value="LEUCYL/PHENYLALANYL-TRNA--PROTEIN TRANSFERASE"/>
    <property type="match status" value="1"/>
</dbReference>
<dbReference type="PANTHER" id="PTHR30098:SF2">
    <property type="entry name" value="LEUCYL_PHENYLALANYL-TRNA--PROTEIN TRANSFERASE"/>
    <property type="match status" value="1"/>
</dbReference>
<dbReference type="Pfam" id="PF03588">
    <property type="entry name" value="Leu_Phe_trans"/>
    <property type="match status" value="1"/>
</dbReference>
<dbReference type="SUPFAM" id="SSF55729">
    <property type="entry name" value="Acyl-CoA N-acyltransferases (Nat)"/>
    <property type="match status" value="1"/>
</dbReference>
<keyword id="KW-0012">Acyltransferase</keyword>
<keyword id="KW-0963">Cytoplasm</keyword>
<keyword id="KW-0808">Transferase</keyword>
<reference key="1">
    <citation type="submission" date="2008-04" db="EMBL/GenBank/DDBJ databases">
        <title>Complete sequence of chromosome 1 of Burkholderia ambifaria MC40-6.</title>
        <authorList>
            <person name="Copeland A."/>
            <person name="Lucas S."/>
            <person name="Lapidus A."/>
            <person name="Glavina del Rio T."/>
            <person name="Dalin E."/>
            <person name="Tice H."/>
            <person name="Pitluck S."/>
            <person name="Chain P."/>
            <person name="Malfatti S."/>
            <person name="Shin M."/>
            <person name="Vergez L."/>
            <person name="Lang D."/>
            <person name="Schmutz J."/>
            <person name="Larimer F."/>
            <person name="Land M."/>
            <person name="Hauser L."/>
            <person name="Kyrpides N."/>
            <person name="Lykidis A."/>
            <person name="Ramette A."/>
            <person name="Konstantinidis K."/>
            <person name="Tiedje J."/>
            <person name="Richardson P."/>
        </authorList>
    </citation>
    <scope>NUCLEOTIDE SEQUENCE [LARGE SCALE GENOMIC DNA]</scope>
    <source>
        <strain>MC40-6</strain>
    </source>
</reference>
<name>LFTR_BURA4</name>
<proteinExistence type="inferred from homology"/>
<organism>
    <name type="scientific">Burkholderia ambifaria (strain MC40-6)</name>
    <dbReference type="NCBI Taxonomy" id="398577"/>
    <lineage>
        <taxon>Bacteria</taxon>
        <taxon>Pseudomonadati</taxon>
        <taxon>Pseudomonadota</taxon>
        <taxon>Betaproteobacteria</taxon>
        <taxon>Burkholderiales</taxon>
        <taxon>Burkholderiaceae</taxon>
        <taxon>Burkholderia</taxon>
        <taxon>Burkholderia cepacia complex</taxon>
    </lineage>
</organism>
<protein>
    <recommendedName>
        <fullName evidence="1">Leucyl/phenylalanyl-tRNA--protein transferase</fullName>
        <ecNumber evidence="1">2.3.2.6</ecNumber>
    </recommendedName>
    <alternativeName>
        <fullName evidence="1">L/F-transferase</fullName>
    </alternativeName>
    <alternativeName>
        <fullName evidence="1">Leucyltransferase</fullName>
    </alternativeName>
    <alternativeName>
        <fullName evidence="1">Phenyalanyltransferase</fullName>
    </alternativeName>
</protein>
<gene>
    <name evidence="1" type="primary">aat</name>
    <name type="ordered locus">BamMC406_1478</name>
</gene>
<comment type="function">
    <text evidence="1">Functions in the N-end rule pathway of protein degradation where it conjugates Leu, Phe and, less efficiently, Met from aminoacyl-tRNAs to the N-termini of proteins containing an N-terminal arginine or lysine.</text>
</comment>
<comment type="catalytic activity">
    <reaction evidence="1">
        <text>N-terminal L-lysyl-[protein] + L-leucyl-tRNA(Leu) = N-terminal L-leucyl-L-lysyl-[protein] + tRNA(Leu) + H(+)</text>
        <dbReference type="Rhea" id="RHEA:12340"/>
        <dbReference type="Rhea" id="RHEA-COMP:9613"/>
        <dbReference type="Rhea" id="RHEA-COMP:9622"/>
        <dbReference type="Rhea" id="RHEA-COMP:12670"/>
        <dbReference type="Rhea" id="RHEA-COMP:12671"/>
        <dbReference type="ChEBI" id="CHEBI:15378"/>
        <dbReference type="ChEBI" id="CHEBI:65249"/>
        <dbReference type="ChEBI" id="CHEBI:78442"/>
        <dbReference type="ChEBI" id="CHEBI:78494"/>
        <dbReference type="ChEBI" id="CHEBI:133043"/>
        <dbReference type="EC" id="2.3.2.6"/>
    </reaction>
</comment>
<comment type="catalytic activity">
    <reaction evidence="1">
        <text>N-terminal L-arginyl-[protein] + L-leucyl-tRNA(Leu) = N-terminal L-leucyl-L-arginyl-[protein] + tRNA(Leu) + H(+)</text>
        <dbReference type="Rhea" id="RHEA:50416"/>
        <dbReference type="Rhea" id="RHEA-COMP:9613"/>
        <dbReference type="Rhea" id="RHEA-COMP:9622"/>
        <dbReference type="Rhea" id="RHEA-COMP:12672"/>
        <dbReference type="Rhea" id="RHEA-COMP:12673"/>
        <dbReference type="ChEBI" id="CHEBI:15378"/>
        <dbReference type="ChEBI" id="CHEBI:64719"/>
        <dbReference type="ChEBI" id="CHEBI:78442"/>
        <dbReference type="ChEBI" id="CHEBI:78494"/>
        <dbReference type="ChEBI" id="CHEBI:133044"/>
        <dbReference type="EC" id="2.3.2.6"/>
    </reaction>
</comment>
<comment type="catalytic activity">
    <reaction evidence="1">
        <text>L-phenylalanyl-tRNA(Phe) + an N-terminal L-alpha-aminoacyl-[protein] = an N-terminal L-phenylalanyl-L-alpha-aminoacyl-[protein] + tRNA(Phe)</text>
        <dbReference type="Rhea" id="RHEA:43632"/>
        <dbReference type="Rhea" id="RHEA-COMP:9668"/>
        <dbReference type="Rhea" id="RHEA-COMP:9699"/>
        <dbReference type="Rhea" id="RHEA-COMP:10636"/>
        <dbReference type="Rhea" id="RHEA-COMP:10637"/>
        <dbReference type="ChEBI" id="CHEBI:78442"/>
        <dbReference type="ChEBI" id="CHEBI:78531"/>
        <dbReference type="ChEBI" id="CHEBI:78597"/>
        <dbReference type="ChEBI" id="CHEBI:83561"/>
        <dbReference type="EC" id="2.3.2.6"/>
    </reaction>
</comment>
<comment type="subcellular location">
    <subcellularLocation>
        <location evidence="1">Cytoplasm</location>
    </subcellularLocation>
</comment>
<comment type="similarity">
    <text evidence="1">Belongs to the L/F-transferase family.</text>
</comment>
<sequence length="254" mass="27960">MVPWLGPDDPFPPVERALGPATGAPGLLAASADLLPSRLIEAYLRGIFPWYSDGQPVLWWSPDPRMILAPAEFKVSPSLRKTLRRVLREPAWEVRVDHDFAGVMRACAQAPRRGQRGTWITAEIIDAYTSLYRSGNAHSIETWHDGRRIGGLYGVAFGRMFFGESMYADATDASKIALATLVAHLREQGLEMIDCQQNTSHLASLGGREIARKAFVAHVRRAVAEPPIPWQFDKRVLAALTGPAEPAAPSGIER</sequence>
<feature type="chain" id="PRO_1000131906" description="Leucyl/phenylalanyl-tRNA--protein transferase">
    <location>
        <begin position="1"/>
        <end position="254"/>
    </location>
</feature>
<accession>B1YPI8</accession>
<evidence type="ECO:0000255" key="1">
    <source>
        <dbReference type="HAMAP-Rule" id="MF_00688"/>
    </source>
</evidence>